<sequence>MVHVRRHETRKNSKTQKPEQKSRVDWHRTKRSISQLFDSDEELDSNEELDSDEEHDSGESIDSDEELDISKKSDINELPEKETELKLIKVESQGSNSKHLTNTSNSSADEEQLKETKHNDLPDDEAHPGQAENHHNRHTGQILEEDMEDEYIKPGKRKRLSSVMYDSDESDDSDILIRKASAKHPRRVVEDECSSLEMEQETPEKSSAARKREYHQKLQELSERSRQRRRRNSGRNFEDSEKDSCSGTGEEDEDEDEDDYRYDEDGDDYMIDDFVVRNEEGDDENSNQQGENLTTSQLKLVKQNSLYSFSDHYTHFERVVKALLINAFDESFLETLYAGTRKKSYAKDMLTSLHYLDNRFIQPRLESLVSRSRWKEQYKERVESYSNLNILSKSPENCVCQACGLHRHCKFSVHLSGKLYNIRTMETDDFMSHDKQVFTVGRICVERTRIYHKLKHFKFKLYQDCCLIAKPEEVGDEQVKDTVKRVFNHSKERGWIRKKYDQLQNFLNSADYFQDEKF</sequence>
<organism>
    <name type="scientific">Mus musculus</name>
    <name type="common">Mouse</name>
    <dbReference type="NCBI Taxonomy" id="10090"/>
    <lineage>
        <taxon>Eukaryota</taxon>
        <taxon>Metazoa</taxon>
        <taxon>Chordata</taxon>
        <taxon>Craniata</taxon>
        <taxon>Vertebrata</taxon>
        <taxon>Euteleostomi</taxon>
        <taxon>Mammalia</taxon>
        <taxon>Eutheria</taxon>
        <taxon>Euarchontoglires</taxon>
        <taxon>Glires</taxon>
        <taxon>Rodentia</taxon>
        <taxon>Myomorpha</taxon>
        <taxon>Muroidea</taxon>
        <taxon>Muridae</taxon>
        <taxon>Murinae</taxon>
        <taxon>Mus</taxon>
        <taxon>Mus</taxon>
    </lineage>
</organism>
<gene>
    <name type="primary">Ccdc82</name>
</gene>
<keyword id="KW-0175">Coiled coil</keyword>
<keyword id="KW-0597">Phosphoprotein</keyword>
<keyword id="KW-1185">Reference proteome</keyword>
<feature type="chain" id="PRO_0000234289" description="Coiled-coil domain-containing protein 82">
    <location>
        <begin position="1"/>
        <end position="518"/>
    </location>
</feature>
<feature type="region of interest" description="Disordered" evidence="4">
    <location>
        <begin position="1"/>
        <end position="266"/>
    </location>
</feature>
<feature type="coiled-coil region" evidence="3">
    <location>
        <begin position="204"/>
        <end position="232"/>
    </location>
</feature>
<feature type="compositionally biased region" description="Basic residues" evidence="4">
    <location>
        <begin position="1"/>
        <end position="14"/>
    </location>
</feature>
<feature type="compositionally biased region" description="Basic and acidic residues" evidence="4">
    <location>
        <begin position="16"/>
        <end position="27"/>
    </location>
</feature>
<feature type="compositionally biased region" description="Acidic residues" evidence="4">
    <location>
        <begin position="38"/>
        <end position="67"/>
    </location>
</feature>
<feature type="compositionally biased region" description="Basic and acidic residues" evidence="4">
    <location>
        <begin position="68"/>
        <end position="89"/>
    </location>
</feature>
<feature type="compositionally biased region" description="Polar residues" evidence="4">
    <location>
        <begin position="92"/>
        <end position="107"/>
    </location>
</feature>
<feature type="compositionally biased region" description="Basic and acidic residues" evidence="4">
    <location>
        <begin position="111"/>
        <end position="127"/>
    </location>
</feature>
<feature type="compositionally biased region" description="Acidic residues" evidence="4">
    <location>
        <begin position="191"/>
        <end position="201"/>
    </location>
</feature>
<feature type="compositionally biased region" description="Basic and acidic residues" evidence="4">
    <location>
        <begin position="215"/>
        <end position="225"/>
    </location>
</feature>
<feature type="compositionally biased region" description="Acidic residues" evidence="4">
    <location>
        <begin position="249"/>
        <end position="266"/>
    </location>
</feature>
<feature type="modified residue" description="Phosphoserine" evidence="1">
    <location>
        <position position="170"/>
    </location>
</feature>
<feature type="modified residue" description="Phosphoserine" evidence="2">
    <location>
        <position position="194"/>
    </location>
</feature>
<feature type="modified residue" description="Phosphothreonine" evidence="2">
    <location>
        <position position="202"/>
    </location>
</feature>
<feature type="modified residue" description="Phosphoserine" evidence="2">
    <location>
        <position position="305"/>
    </location>
</feature>
<protein>
    <recommendedName>
        <fullName>Coiled-coil domain-containing protein 82</fullName>
    </recommendedName>
</protein>
<dbReference type="EMBL" id="BC057326">
    <property type="protein sequence ID" value="AAH57326.1"/>
    <property type="molecule type" value="mRNA"/>
</dbReference>
<dbReference type="EMBL" id="BC098496">
    <property type="protein sequence ID" value="AAH98496.1"/>
    <property type="molecule type" value="mRNA"/>
</dbReference>
<dbReference type="EMBL" id="AK009932">
    <property type="protein sequence ID" value="BAE43217.1"/>
    <property type="molecule type" value="mRNA"/>
</dbReference>
<dbReference type="CCDS" id="CCDS57651.1"/>
<dbReference type="RefSeq" id="NP_079810.2">
    <property type="nucleotide sequence ID" value="NM_025534.4"/>
</dbReference>
<dbReference type="RefSeq" id="XP_017169000.1">
    <property type="nucleotide sequence ID" value="XM_017313511.2"/>
</dbReference>
<dbReference type="RefSeq" id="XP_017169001.1">
    <property type="nucleotide sequence ID" value="XM_017313512.3"/>
</dbReference>
<dbReference type="RefSeq" id="XP_017169002.1">
    <property type="nucleotide sequence ID" value="XM_017313513.2"/>
</dbReference>
<dbReference type="SMR" id="Q6PG04"/>
<dbReference type="FunCoup" id="Q6PG04">
    <property type="interactions" value="2973"/>
</dbReference>
<dbReference type="STRING" id="10090.ENSMUSP00000150947"/>
<dbReference type="iPTMnet" id="Q6PG04"/>
<dbReference type="PhosphoSitePlus" id="Q6PG04"/>
<dbReference type="PaxDb" id="10090-ENSMUSP00000106212"/>
<dbReference type="PeptideAtlas" id="Q6PG04"/>
<dbReference type="ProteomicsDB" id="281317"/>
<dbReference type="Antibodypedia" id="31692">
    <property type="antibodies" value="84 antibodies from 14 providers"/>
</dbReference>
<dbReference type="DNASU" id="66396"/>
<dbReference type="Ensembl" id="ENSMUST00000110583.12">
    <property type="protein sequence ID" value="ENSMUSP00000106212.3"/>
    <property type="gene ID" value="ENSMUSG00000079084.13"/>
</dbReference>
<dbReference type="Ensembl" id="ENSMUST00000217444.4">
    <property type="protein sequence ID" value="ENSMUSP00000150947.2"/>
    <property type="gene ID" value="ENSMUSG00000079084.13"/>
</dbReference>
<dbReference type="GeneID" id="66396"/>
<dbReference type="KEGG" id="mmu:66396"/>
<dbReference type="UCSC" id="uc009shr.1">
    <property type="organism name" value="mouse"/>
</dbReference>
<dbReference type="AGR" id="MGI:1913646"/>
<dbReference type="CTD" id="79780"/>
<dbReference type="MGI" id="MGI:1913646">
    <property type="gene designation" value="Ccdc82"/>
</dbReference>
<dbReference type="VEuPathDB" id="HostDB:ENSMUSG00000079084"/>
<dbReference type="eggNOG" id="KOG4805">
    <property type="taxonomic scope" value="Eukaryota"/>
</dbReference>
<dbReference type="GeneTree" id="ENSGT00390000004986"/>
<dbReference type="HOGENOM" id="CLU_037130_0_0_1"/>
<dbReference type="InParanoid" id="Q6PG04"/>
<dbReference type="OMA" id="HYVHFKR"/>
<dbReference type="OrthoDB" id="21499at2759"/>
<dbReference type="PhylomeDB" id="Q6PG04"/>
<dbReference type="TreeFam" id="TF328837"/>
<dbReference type="BioGRID-ORCS" id="66396">
    <property type="hits" value="2 hits in 75 CRISPR screens"/>
</dbReference>
<dbReference type="ChiTaRS" id="Ccdc82">
    <property type="organism name" value="mouse"/>
</dbReference>
<dbReference type="PRO" id="PR:Q6PG04"/>
<dbReference type="Proteomes" id="UP000000589">
    <property type="component" value="Chromosome 9"/>
</dbReference>
<dbReference type="RNAct" id="Q6PG04">
    <property type="molecule type" value="protein"/>
</dbReference>
<dbReference type="Bgee" id="ENSMUSG00000079084">
    <property type="expression patterns" value="Expressed in carotid body and 222 other cell types or tissues"/>
</dbReference>
<dbReference type="ExpressionAtlas" id="Q6PG04">
    <property type="expression patterns" value="baseline and differential"/>
</dbReference>
<dbReference type="InterPro" id="IPR025244">
    <property type="entry name" value="CCDC82"/>
</dbReference>
<dbReference type="InterPro" id="IPR025451">
    <property type="entry name" value="DUF4211"/>
</dbReference>
<dbReference type="PANTHER" id="PTHR14689:SF0">
    <property type="entry name" value="COILED-COIL DOMAIN-CONTAINING PROTEIN 82"/>
    <property type="match status" value="1"/>
</dbReference>
<dbReference type="PANTHER" id="PTHR14689">
    <property type="entry name" value="PHORBOL-ESTER_DAG-TYPE DOMAIN-CONTAINING PROTEIN"/>
    <property type="match status" value="1"/>
</dbReference>
<dbReference type="Pfam" id="PF13846">
    <property type="entry name" value="DUF4196"/>
    <property type="match status" value="1"/>
</dbReference>
<dbReference type="Pfam" id="PF13926">
    <property type="entry name" value="DUF4211"/>
    <property type="match status" value="1"/>
</dbReference>
<reference key="1">
    <citation type="journal article" date="2004" name="Genome Res.">
        <title>The status, quality, and expansion of the NIH full-length cDNA project: the Mammalian Gene Collection (MGC).</title>
        <authorList>
            <consortium name="The MGC Project Team"/>
        </authorList>
    </citation>
    <scope>NUCLEOTIDE SEQUENCE [LARGE SCALE MRNA]</scope>
    <source>
        <strain>C57BL/6J</strain>
        <strain>CD-1</strain>
        <tissue>Brain</tissue>
        <tissue>Neural stem cell</tissue>
    </source>
</reference>
<reference key="2">
    <citation type="journal article" date="2005" name="Science">
        <title>The transcriptional landscape of the mammalian genome.</title>
        <authorList>
            <person name="Carninci P."/>
            <person name="Kasukawa T."/>
            <person name="Katayama S."/>
            <person name="Gough J."/>
            <person name="Frith M.C."/>
            <person name="Maeda N."/>
            <person name="Oyama R."/>
            <person name="Ravasi T."/>
            <person name="Lenhard B."/>
            <person name="Wells C."/>
            <person name="Kodzius R."/>
            <person name="Shimokawa K."/>
            <person name="Bajic V.B."/>
            <person name="Brenner S.E."/>
            <person name="Batalov S."/>
            <person name="Forrest A.R."/>
            <person name="Zavolan M."/>
            <person name="Davis M.J."/>
            <person name="Wilming L.G."/>
            <person name="Aidinis V."/>
            <person name="Allen J.E."/>
            <person name="Ambesi-Impiombato A."/>
            <person name="Apweiler R."/>
            <person name="Aturaliya R.N."/>
            <person name="Bailey T.L."/>
            <person name="Bansal M."/>
            <person name="Baxter L."/>
            <person name="Beisel K.W."/>
            <person name="Bersano T."/>
            <person name="Bono H."/>
            <person name="Chalk A.M."/>
            <person name="Chiu K.P."/>
            <person name="Choudhary V."/>
            <person name="Christoffels A."/>
            <person name="Clutterbuck D.R."/>
            <person name="Crowe M.L."/>
            <person name="Dalla E."/>
            <person name="Dalrymple B.P."/>
            <person name="de Bono B."/>
            <person name="Della Gatta G."/>
            <person name="di Bernardo D."/>
            <person name="Down T."/>
            <person name="Engstrom P."/>
            <person name="Fagiolini M."/>
            <person name="Faulkner G."/>
            <person name="Fletcher C.F."/>
            <person name="Fukushima T."/>
            <person name="Furuno M."/>
            <person name="Futaki S."/>
            <person name="Gariboldi M."/>
            <person name="Georgii-Hemming P."/>
            <person name="Gingeras T.R."/>
            <person name="Gojobori T."/>
            <person name="Green R.E."/>
            <person name="Gustincich S."/>
            <person name="Harbers M."/>
            <person name="Hayashi Y."/>
            <person name="Hensch T.K."/>
            <person name="Hirokawa N."/>
            <person name="Hill D."/>
            <person name="Huminiecki L."/>
            <person name="Iacono M."/>
            <person name="Ikeo K."/>
            <person name="Iwama A."/>
            <person name="Ishikawa T."/>
            <person name="Jakt M."/>
            <person name="Kanapin A."/>
            <person name="Katoh M."/>
            <person name="Kawasawa Y."/>
            <person name="Kelso J."/>
            <person name="Kitamura H."/>
            <person name="Kitano H."/>
            <person name="Kollias G."/>
            <person name="Krishnan S.P."/>
            <person name="Kruger A."/>
            <person name="Kummerfeld S.K."/>
            <person name="Kurochkin I.V."/>
            <person name="Lareau L.F."/>
            <person name="Lazarevic D."/>
            <person name="Lipovich L."/>
            <person name="Liu J."/>
            <person name="Liuni S."/>
            <person name="McWilliam S."/>
            <person name="Madan Babu M."/>
            <person name="Madera M."/>
            <person name="Marchionni L."/>
            <person name="Matsuda H."/>
            <person name="Matsuzawa S."/>
            <person name="Miki H."/>
            <person name="Mignone F."/>
            <person name="Miyake S."/>
            <person name="Morris K."/>
            <person name="Mottagui-Tabar S."/>
            <person name="Mulder N."/>
            <person name="Nakano N."/>
            <person name="Nakauchi H."/>
            <person name="Ng P."/>
            <person name="Nilsson R."/>
            <person name="Nishiguchi S."/>
            <person name="Nishikawa S."/>
            <person name="Nori F."/>
            <person name="Ohara O."/>
            <person name="Okazaki Y."/>
            <person name="Orlando V."/>
            <person name="Pang K.C."/>
            <person name="Pavan W.J."/>
            <person name="Pavesi G."/>
            <person name="Pesole G."/>
            <person name="Petrovsky N."/>
            <person name="Piazza S."/>
            <person name="Reed J."/>
            <person name="Reid J.F."/>
            <person name="Ring B.Z."/>
            <person name="Ringwald M."/>
            <person name="Rost B."/>
            <person name="Ruan Y."/>
            <person name="Salzberg S.L."/>
            <person name="Sandelin A."/>
            <person name="Schneider C."/>
            <person name="Schoenbach C."/>
            <person name="Sekiguchi K."/>
            <person name="Semple C.A."/>
            <person name="Seno S."/>
            <person name="Sessa L."/>
            <person name="Sheng Y."/>
            <person name="Shibata Y."/>
            <person name="Shimada H."/>
            <person name="Shimada K."/>
            <person name="Silva D."/>
            <person name="Sinclair B."/>
            <person name="Sperling S."/>
            <person name="Stupka E."/>
            <person name="Sugiura K."/>
            <person name="Sultana R."/>
            <person name="Takenaka Y."/>
            <person name="Taki K."/>
            <person name="Tammoja K."/>
            <person name="Tan S.L."/>
            <person name="Tang S."/>
            <person name="Taylor M.S."/>
            <person name="Tegner J."/>
            <person name="Teichmann S.A."/>
            <person name="Ueda H.R."/>
            <person name="van Nimwegen E."/>
            <person name="Verardo R."/>
            <person name="Wei C.L."/>
            <person name="Yagi K."/>
            <person name="Yamanishi H."/>
            <person name="Zabarovsky E."/>
            <person name="Zhu S."/>
            <person name="Zimmer A."/>
            <person name="Hide W."/>
            <person name="Bult C."/>
            <person name="Grimmond S.M."/>
            <person name="Teasdale R.D."/>
            <person name="Liu E.T."/>
            <person name="Brusic V."/>
            <person name="Quackenbush J."/>
            <person name="Wahlestedt C."/>
            <person name="Mattick J.S."/>
            <person name="Hume D.A."/>
            <person name="Kai C."/>
            <person name="Sasaki D."/>
            <person name="Tomaru Y."/>
            <person name="Fukuda S."/>
            <person name="Kanamori-Katayama M."/>
            <person name="Suzuki M."/>
            <person name="Aoki J."/>
            <person name="Arakawa T."/>
            <person name="Iida J."/>
            <person name="Imamura K."/>
            <person name="Itoh M."/>
            <person name="Kato T."/>
            <person name="Kawaji H."/>
            <person name="Kawagashira N."/>
            <person name="Kawashima T."/>
            <person name="Kojima M."/>
            <person name="Kondo S."/>
            <person name="Konno H."/>
            <person name="Nakano K."/>
            <person name="Ninomiya N."/>
            <person name="Nishio T."/>
            <person name="Okada M."/>
            <person name="Plessy C."/>
            <person name="Shibata K."/>
            <person name="Shiraki T."/>
            <person name="Suzuki S."/>
            <person name="Tagami M."/>
            <person name="Waki K."/>
            <person name="Watahiki A."/>
            <person name="Okamura-Oho Y."/>
            <person name="Suzuki H."/>
            <person name="Kawai J."/>
            <person name="Hayashizaki Y."/>
        </authorList>
    </citation>
    <scope>NUCLEOTIDE SEQUENCE [LARGE SCALE MRNA] OF 1-155</scope>
    <source>
        <strain>C57BL/6J</strain>
        <tissue>Tongue</tissue>
    </source>
</reference>
<name>CCD82_MOUSE</name>
<accession>Q6PG04</accession>
<accession>Q3V462</accession>
<proteinExistence type="evidence at transcript level"/>
<evidence type="ECO:0000250" key="1">
    <source>
        <dbReference type="UniProtKB" id="Q66H73"/>
    </source>
</evidence>
<evidence type="ECO:0000250" key="2">
    <source>
        <dbReference type="UniProtKB" id="Q8N4S0"/>
    </source>
</evidence>
<evidence type="ECO:0000255" key="3"/>
<evidence type="ECO:0000256" key="4">
    <source>
        <dbReference type="SAM" id="MobiDB-lite"/>
    </source>
</evidence>